<evidence type="ECO:0000255" key="1">
    <source>
        <dbReference type="HAMAP-Rule" id="MF_00639"/>
    </source>
</evidence>
<gene>
    <name evidence="1" type="primary">murD</name>
    <name type="ordered locus">BTH_I1116</name>
</gene>
<accession>Q2SZI5</accession>
<proteinExistence type="inferred from homology"/>
<keyword id="KW-0067">ATP-binding</keyword>
<keyword id="KW-0131">Cell cycle</keyword>
<keyword id="KW-0132">Cell division</keyword>
<keyword id="KW-0133">Cell shape</keyword>
<keyword id="KW-0961">Cell wall biogenesis/degradation</keyword>
<keyword id="KW-0963">Cytoplasm</keyword>
<keyword id="KW-0436">Ligase</keyword>
<keyword id="KW-0547">Nucleotide-binding</keyword>
<keyword id="KW-0573">Peptidoglycan synthesis</keyword>
<reference key="1">
    <citation type="journal article" date="2005" name="BMC Genomics">
        <title>Bacterial genome adaptation to niches: divergence of the potential virulence genes in three Burkholderia species of different survival strategies.</title>
        <authorList>
            <person name="Kim H.S."/>
            <person name="Schell M.A."/>
            <person name="Yu Y."/>
            <person name="Ulrich R.L."/>
            <person name="Sarria S.H."/>
            <person name="Nierman W.C."/>
            <person name="DeShazer D."/>
        </authorList>
    </citation>
    <scope>NUCLEOTIDE SEQUENCE [LARGE SCALE GENOMIC DNA]</scope>
    <source>
        <strain>ATCC 700388 / DSM 13276 / CCUG 48851 / CIP 106301 / E264</strain>
    </source>
</reference>
<organism>
    <name type="scientific">Burkholderia thailandensis (strain ATCC 700388 / DSM 13276 / CCUG 48851 / CIP 106301 / E264)</name>
    <dbReference type="NCBI Taxonomy" id="271848"/>
    <lineage>
        <taxon>Bacteria</taxon>
        <taxon>Pseudomonadati</taxon>
        <taxon>Pseudomonadota</taxon>
        <taxon>Betaproteobacteria</taxon>
        <taxon>Burkholderiales</taxon>
        <taxon>Burkholderiaceae</taxon>
        <taxon>Burkholderia</taxon>
        <taxon>pseudomallei group</taxon>
    </lineage>
</organism>
<dbReference type="EC" id="6.3.2.9" evidence="1"/>
<dbReference type="EMBL" id="CP000086">
    <property type="protein sequence ID" value="ABC38091.1"/>
    <property type="molecule type" value="Genomic_DNA"/>
</dbReference>
<dbReference type="RefSeq" id="WP_009888779.1">
    <property type="nucleotide sequence ID" value="NZ_CP008785.1"/>
</dbReference>
<dbReference type="SMR" id="Q2SZI5"/>
<dbReference type="GeneID" id="45120868"/>
<dbReference type="KEGG" id="bte:BTH_I1116"/>
<dbReference type="HOGENOM" id="CLU_032540_1_1_4"/>
<dbReference type="UniPathway" id="UPA00219"/>
<dbReference type="Proteomes" id="UP000001930">
    <property type="component" value="Chromosome I"/>
</dbReference>
<dbReference type="GO" id="GO:0005737">
    <property type="term" value="C:cytoplasm"/>
    <property type="evidence" value="ECO:0007669"/>
    <property type="project" value="UniProtKB-SubCell"/>
</dbReference>
<dbReference type="GO" id="GO:0005524">
    <property type="term" value="F:ATP binding"/>
    <property type="evidence" value="ECO:0007669"/>
    <property type="project" value="UniProtKB-UniRule"/>
</dbReference>
<dbReference type="GO" id="GO:0008764">
    <property type="term" value="F:UDP-N-acetylmuramoylalanine-D-glutamate ligase activity"/>
    <property type="evidence" value="ECO:0007669"/>
    <property type="project" value="UniProtKB-UniRule"/>
</dbReference>
<dbReference type="GO" id="GO:0051301">
    <property type="term" value="P:cell division"/>
    <property type="evidence" value="ECO:0007669"/>
    <property type="project" value="UniProtKB-KW"/>
</dbReference>
<dbReference type="GO" id="GO:0071555">
    <property type="term" value="P:cell wall organization"/>
    <property type="evidence" value="ECO:0007669"/>
    <property type="project" value="UniProtKB-KW"/>
</dbReference>
<dbReference type="GO" id="GO:0009252">
    <property type="term" value="P:peptidoglycan biosynthetic process"/>
    <property type="evidence" value="ECO:0007669"/>
    <property type="project" value="UniProtKB-UniRule"/>
</dbReference>
<dbReference type="GO" id="GO:0008360">
    <property type="term" value="P:regulation of cell shape"/>
    <property type="evidence" value="ECO:0007669"/>
    <property type="project" value="UniProtKB-KW"/>
</dbReference>
<dbReference type="Gene3D" id="3.90.190.20">
    <property type="entry name" value="Mur ligase, C-terminal domain"/>
    <property type="match status" value="1"/>
</dbReference>
<dbReference type="Gene3D" id="3.40.1190.10">
    <property type="entry name" value="Mur-like, catalytic domain"/>
    <property type="match status" value="1"/>
</dbReference>
<dbReference type="Gene3D" id="3.40.50.720">
    <property type="entry name" value="NAD(P)-binding Rossmann-like Domain"/>
    <property type="match status" value="1"/>
</dbReference>
<dbReference type="HAMAP" id="MF_00639">
    <property type="entry name" value="MurD"/>
    <property type="match status" value="1"/>
</dbReference>
<dbReference type="InterPro" id="IPR036565">
    <property type="entry name" value="Mur-like_cat_sf"/>
</dbReference>
<dbReference type="InterPro" id="IPR004101">
    <property type="entry name" value="Mur_ligase_C"/>
</dbReference>
<dbReference type="InterPro" id="IPR036615">
    <property type="entry name" value="Mur_ligase_C_dom_sf"/>
</dbReference>
<dbReference type="InterPro" id="IPR013221">
    <property type="entry name" value="Mur_ligase_cen"/>
</dbReference>
<dbReference type="InterPro" id="IPR005762">
    <property type="entry name" value="MurD"/>
</dbReference>
<dbReference type="NCBIfam" id="TIGR01087">
    <property type="entry name" value="murD"/>
    <property type="match status" value="1"/>
</dbReference>
<dbReference type="PANTHER" id="PTHR43692">
    <property type="entry name" value="UDP-N-ACETYLMURAMOYLALANINE--D-GLUTAMATE LIGASE"/>
    <property type="match status" value="1"/>
</dbReference>
<dbReference type="PANTHER" id="PTHR43692:SF1">
    <property type="entry name" value="UDP-N-ACETYLMURAMOYLALANINE--D-GLUTAMATE LIGASE"/>
    <property type="match status" value="1"/>
</dbReference>
<dbReference type="Pfam" id="PF02875">
    <property type="entry name" value="Mur_ligase_C"/>
    <property type="match status" value="1"/>
</dbReference>
<dbReference type="Pfam" id="PF08245">
    <property type="entry name" value="Mur_ligase_M"/>
    <property type="match status" value="1"/>
</dbReference>
<dbReference type="Pfam" id="PF21799">
    <property type="entry name" value="MurD-like_N"/>
    <property type="match status" value="1"/>
</dbReference>
<dbReference type="SUPFAM" id="SSF51984">
    <property type="entry name" value="MurCD N-terminal domain"/>
    <property type="match status" value="1"/>
</dbReference>
<dbReference type="SUPFAM" id="SSF53623">
    <property type="entry name" value="MurD-like peptide ligases, catalytic domain"/>
    <property type="match status" value="1"/>
</dbReference>
<dbReference type="SUPFAM" id="SSF53244">
    <property type="entry name" value="MurD-like peptide ligases, peptide-binding domain"/>
    <property type="match status" value="1"/>
</dbReference>
<protein>
    <recommendedName>
        <fullName evidence="1">UDP-N-acetylmuramoylalanine--D-glutamate ligase</fullName>
        <ecNumber evidence="1">6.3.2.9</ecNumber>
    </recommendedName>
    <alternativeName>
        <fullName evidence="1">D-glutamic acid-adding enzyme</fullName>
    </alternativeName>
    <alternativeName>
        <fullName evidence="1">UDP-N-acetylmuramoyl-L-alanyl-D-glutamate synthetase</fullName>
    </alternativeName>
</protein>
<comment type="function">
    <text evidence="1">Cell wall formation. Catalyzes the addition of glutamate to the nucleotide precursor UDP-N-acetylmuramoyl-L-alanine (UMA).</text>
</comment>
<comment type="catalytic activity">
    <reaction evidence="1">
        <text>UDP-N-acetyl-alpha-D-muramoyl-L-alanine + D-glutamate + ATP = UDP-N-acetyl-alpha-D-muramoyl-L-alanyl-D-glutamate + ADP + phosphate + H(+)</text>
        <dbReference type="Rhea" id="RHEA:16429"/>
        <dbReference type="ChEBI" id="CHEBI:15378"/>
        <dbReference type="ChEBI" id="CHEBI:29986"/>
        <dbReference type="ChEBI" id="CHEBI:30616"/>
        <dbReference type="ChEBI" id="CHEBI:43474"/>
        <dbReference type="ChEBI" id="CHEBI:83898"/>
        <dbReference type="ChEBI" id="CHEBI:83900"/>
        <dbReference type="ChEBI" id="CHEBI:456216"/>
        <dbReference type="EC" id="6.3.2.9"/>
    </reaction>
</comment>
<comment type="pathway">
    <text evidence="1">Cell wall biogenesis; peptidoglycan biosynthesis.</text>
</comment>
<comment type="subcellular location">
    <subcellularLocation>
        <location evidence="1">Cytoplasm</location>
    </subcellularLocation>
</comment>
<comment type="similarity">
    <text evidence="1">Belongs to the MurCDEF family.</text>
</comment>
<name>MURD_BURTA</name>
<sequence length="504" mass="52622">MFGDRQRPMVLVLGLGESGLAIARWCARHGCRLRIADTRETPPNLAALTAAGIDAEFVGGAFSPALIDGGIELVALSPGLSPLAEDLAPLVAAARERGIPVWGELEFFAQALTTLGANGYAPKVIAITGTNGKTTTTSLAGLLCERAGKTVAVAGNISPAMLDKLTEAIDAAALPDVWVLELSSFQLDTAHTFAPDAATILNITQDHLDWHGGFAAYAAAKGRIFGPRTVRVLNRDDAEVMKFAPPAAAADAPRAITFGLNEPAADGDYGLLRENGIAWLVEAVDRDAADAPATPSRRRKQEAANPPDIALKRLMPADALRIRGLHNAANALAAYALARAIDLPAAPLLHGLREYRGEPHRVEVIATLDGVDYVDDSKGTNVGATVAALDGLAQRAVLIAGGDGKGQDFEPLAAPVARWCRAVMLIGRDAPALREALADTGVPLADHATLESAVRAAGALAQPGDAVLLSPACASLDMFRNYAHRADVFRSAVEDIALEKGTTL</sequence>
<feature type="chain" id="PRO_0000257173" description="UDP-N-acetylmuramoylalanine--D-glutamate ligase">
    <location>
        <begin position="1"/>
        <end position="504"/>
    </location>
</feature>
<feature type="binding site" evidence="1">
    <location>
        <begin position="129"/>
        <end position="135"/>
    </location>
    <ligand>
        <name>ATP</name>
        <dbReference type="ChEBI" id="CHEBI:30616"/>
    </ligand>
</feature>